<evidence type="ECO:0000250" key="1">
    <source>
        <dbReference type="UniProtKB" id="Q3UWY1"/>
    </source>
</evidence>
<evidence type="ECO:0000255" key="2"/>
<evidence type="ECO:0000305" key="3"/>
<evidence type="ECO:0000312" key="4">
    <source>
        <dbReference type="HGNC" id="HGNC:24908"/>
    </source>
</evidence>
<reference key="1">
    <citation type="journal article" date="2006" name="Nature">
        <title>The DNA sequence and biological annotation of human chromosome 1.</title>
        <authorList>
            <person name="Gregory S.G."/>
            <person name="Barlow K.F."/>
            <person name="McLay K.E."/>
            <person name="Kaul R."/>
            <person name="Swarbreck D."/>
            <person name="Dunham A."/>
            <person name="Scott C.E."/>
            <person name="Howe K.L."/>
            <person name="Woodfine K."/>
            <person name="Spencer C.C.A."/>
            <person name="Jones M.C."/>
            <person name="Gillson C."/>
            <person name="Searle S."/>
            <person name="Zhou Y."/>
            <person name="Kokocinski F."/>
            <person name="McDonald L."/>
            <person name="Evans R."/>
            <person name="Phillips K."/>
            <person name="Atkinson A."/>
            <person name="Cooper R."/>
            <person name="Jones C."/>
            <person name="Hall R.E."/>
            <person name="Andrews T.D."/>
            <person name="Lloyd C."/>
            <person name="Ainscough R."/>
            <person name="Almeida J.P."/>
            <person name="Ambrose K.D."/>
            <person name="Anderson F."/>
            <person name="Andrew R.W."/>
            <person name="Ashwell R.I.S."/>
            <person name="Aubin K."/>
            <person name="Babbage A.K."/>
            <person name="Bagguley C.L."/>
            <person name="Bailey J."/>
            <person name="Beasley H."/>
            <person name="Bethel G."/>
            <person name="Bird C.P."/>
            <person name="Bray-Allen S."/>
            <person name="Brown J.Y."/>
            <person name="Brown A.J."/>
            <person name="Buckley D."/>
            <person name="Burton J."/>
            <person name="Bye J."/>
            <person name="Carder C."/>
            <person name="Chapman J.C."/>
            <person name="Clark S.Y."/>
            <person name="Clarke G."/>
            <person name="Clee C."/>
            <person name="Cobley V."/>
            <person name="Collier R.E."/>
            <person name="Corby N."/>
            <person name="Coville G.J."/>
            <person name="Davies J."/>
            <person name="Deadman R."/>
            <person name="Dunn M."/>
            <person name="Earthrowl M."/>
            <person name="Ellington A.G."/>
            <person name="Errington H."/>
            <person name="Frankish A."/>
            <person name="Frankland J."/>
            <person name="French L."/>
            <person name="Garner P."/>
            <person name="Garnett J."/>
            <person name="Gay L."/>
            <person name="Ghori M.R.J."/>
            <person name="Gibson R."/>
            <person name="Gilby L.M."/>
            <person name="Gillett W."/>
            <person name="Glithero R.J."/>
            <person name="Grafham D.V."/>
            <person name="Griffiths C."/>
            <person name="Griffiths-Jones S."/>
            <person name="Grocock R."/>
            <person name="Hammond S."/>
            <person name="Harrison E.S.I."/>
            <person name="Hart E."/>
            <person name="Haugen E."/>
            <person name="Heath P.D."/>
            <person name="Holmes S."/>
            <person name="Holt K."/>
            <person name="Howden P.J."/>
            <person name="Hunt A.R."/>
            <person name="Hunt S.E."/>
            <person name="Hunter G."/>
            <person name="Isherwood J."/>
            <person name="James R."/>
            <person name="Johnson C."/>
            <person name="Johnson D."/>
            <person name="Joy A."/>
            <person name="Kay M."/>
            <person name="Kershaw J.K."/>
            <person name="Kibukawa M."/>
            <person name="Kimberley A.M."/>
            <person name="King A."/>
            <person name="Knights A.J."/>
            <person name="Lad H."/>
            <person name="Laird G."/>
            <person name="Lawlor S."/>
            <person name="Leongamornlert D.A."/>
            <person name="Lloyd D.M."/>
            <person name="Loveland J."/>
            <person name="Lovell J."/>
            <person name="Lush M.J."/>
            <person name="Lyne R."/>
            <person name="Martin S."/>
            <person name="Mashreghi-Mohammadi M."/>
            <person name="Matthews L."/>
            <person name="Matthews N.S.W."/>
            <person name="McLaren S."/>
            <person name="Milne S."/>
            <person name="Mistry S."/>
            <person name="Moore M.J.F."/>
            <person name="Nickerson T."/>
            <person name="O'Dell C.N."/>
            <person name="Oliver K."/>
            <person name="Palmeiri A."/>
            <person name="Palmer S.A."/>
            <person name="Parker A."/>
            <person name="Patel D."/>
            <person name="Pearce A.V."/>
            <person name="Peck A.I."/>
            <person name="Pelan S."/>
            <person name="Phelps K."/>
            <person name="Phillimore B.J."/>
            <person name="Plumb R."/>
            <person name="Rajan J."/>
            <person name="Raymond C."/>
            <person name="Rouse G."/>
            <person name="Saenphimmachak C."/>
            <person name="Sehra H.K."/>
            <person name="Sheridan E."/>
            <person name="Shownkeen R."/>
            <person name="Sims S."/>
            <person name="Skuce C.D."/>
            <person name="Smith M."/>
            <person name="Steward C."/>
            <person name="Subramanian S."/>
            <person name="Sycamore N."/>
            <person name="Tracey A."/>
            <person name="Tromans A."/>
            <person name="Van Helmond Z."/>
            <person name="Wall M."/>
            <person name="Wallis J.M."/>
            <person name="White S."/>
            <person name="Whitehead S.L."/>
            <person name="Wilkinson J.E."/>
            <person name="Willey D.L."/>
            <person name="Williams H."/>
            <person name="Wilming L."/>
            <person name="Wray P.W."/>
            <person name="Wu Z."/>
            <person name="Coulson A."/>
            <person name="Vaudin M."/>
            <person name="Sulston J.E."/>
            <person name="Durbin R.M."/>
            <person name="Hubbard T."/>
            <person name="Wooster R."/>
            <person name="Dunham I."/>
            <person name="Carter N.P."/>
            <person name="McVean G."/>
            <person name="Ross M.T."/>
            <person name="Harrow J."/>
            <person name="Olson M.V."/>
            <person name="Beck S."/>
            <person name="Rogers J."/>
            <person name="Bentley D.R."/>
        </authorList>
    </citation>
    <scope>NUCLEOTIDE SEQUENCE [LARGE SCALE GENOMIC DNA]</scope>
</reference>
<sequence>MSFQAPRRLLELAGQSLLRDQALAISVLDELPRELFPRLFVEAFTSRCCEVLKVMVQAWPFPCLPLGSLMKTPDLEILHYVVDGIDCLLAQKVRPRRWKLQVLEMRDVDENFWTIWSGARPLSCSPEAMSKRQTVEDCPRTGEKQPLKVFMDVCLKEKSVDEDLSFFSGWVQHRRRSVHLCCTKVVNYSMNILNFRNILETVYPDSIQVLEIWNMCWPCMVAEVSRYLSQMKNLRKLFISDGCGYLPSFESQGQLVAEFSSVFLRLEYLQMLYMRRIRFFEGYLDQLIRCLKSPLETLALTYGSLDEEDLKCLPWYPSLSQLKQLNLSHGTLRFIRLEPLRALLEKVAATLQTLFLVDCGIGDSKLRVILPALSRCSNLTTFCFHGNDTSMDGLKDLLRHTGRLSNLSLETYPAPRESLDNRGRVISELLTPLQAELMRILREVREPNRIFFGPVSCPCCGMSPTEQLEFNFCLRGRPA</sequence>
<proteinExistence type="inferred from homology"/>
<organism>
    <name type="scientific">Homo sapiens</name>
    <name type="common">Human</name>
    <dbReference type="NCBI Taxonomy" id="9606"/>
    <lineage>
        <taxon>Eukaryota</taxon>
        <taxon>Metazoa</taxon>
        <taxon>Chordata</taxon>
        <taxon>Craniata</taxon>
        <taxon>Vertebrata</taxon>
        <taxon>Euteleostomi</taxon>
        <taxon>Mammalia</taxon>
        <taxon>Eutheria</taxon>
        <taxon>Euarchontoglires</taxon>
        <taxon>Primates</taxon>
        <taxon>Haplorrhini</taxon>
        <taxon>Catarrhini</taxon>
        <taxon>Hominidae</taxon>
        <taxon>Homo</taxon>
    </lineage>
</organism>
<protein>
    <recommendedName>
        <fullName evidence="4">PRAME family member 19</fullName>
    </recommendedName>
</protein>
<gene>
    <name evidence="4" type="primary">PRAMEF19</name>
</gene>
<dbReference type="EMBL" id="AC243961">
    <property type="status" value="NOT_ANNOTATED_CDS"/>
    <property type="molecule type" value="Genomic_DNA"/>
</dbReference>
<dbReference type="EMBL" id="AL603890">
    <property type="status" value="NOT_ANNOTATED_CDS"/>
    <property type="molecule type" value="Genomic_DNA"/>
</dbReference>
<dbReference type="CCDS" id="CCDS41263.1"/>
<dbReference type="RefSeq" id="NP_001093260.3">
    <property type="nucleotide sequence ID" value="NM_001099790.5"/>
</dbReference>
<dbReference type="SMR" id="Q5SWL8"/>
<dbReference type="FunCoup" id="Q5SWL8">
    <property type="interactions" value="17"/>
</dbReference>
<dbReference type="STRING" id="9606.ENSP00000365269"/>
<dbReference type="iPTMnet" id="Q5SWL8"/>
<dbReference type="PhosphoSitePlus" id="Q5SWL8"/>
<dbReference type="BioMuta" id="PRAMEF19"/>
<dbReference type="DMDM" id="74756124"/>
<dbReference type="MassIVE" id="Q5SWL8"/>
<dbReference type="PeptideAtlas" id="Q5SWL8"/>
<dbReference type="Pumba" id="Q5SWL8"/>
<dbReference type="Antibodypedia" id="71972">
    <property type="antibodies" value="8 antibodies from 4 providers"/>
</dbReference>
<dbReference type="DNASU" id="645414"/>
<dbReference type="Ensembl" id="ENST00000376101.4">
    <property type="protein sequence ID" value="ENSP00000365269.2"/>
    <property type="gene ID" value="ENSG00000204480.9"/>
</dbReference>
<dbReference type="GeneID" id="645414"/>
<dbReference type="KEGG" id="hsa:645414"/>
<dbReference type="MANE-Select" id="ENST00000376101.4">
    <property type="protein sequence ID" value="ENSP00000365269.2"/>
    <property type="RefSeq nucleotide sequence ID" value="NM_001099790.5"/>
    <property type="RefSeq protein sequence ID" value="NP_001093260.3"/>
</dbReference>
<dbReference type="UCSC" id="uc057clc.1">
    <property type="organism name" value="human"/>
</dbReference>
<dbReference type="AGR" id="HGNC:24908"/>
<dbReference type="CTD" id="645414"/>
<dbReference type="GeneCards" id="PRAMEF19"/>
<dbReference type="HGNC" id="HGNC:24908">
    <property type="gene designation" value="PRAMEF19"/>
</dbReference>
<dbReference type="HPA" id="ENSG00000204480">
    <property type="expression patterns" value="Not detected"/>
</dbReference>
<dbReference type="neXtProt" id="NX_Q5SWL8"/>
<dbReference type="OpenTargets" id="ENSG00000204480"/>
<dbReference type="VEuPathDB" id="HostDB:ENSG00000204480"/>
<dbReference type="GeneTree" id="ENSGT01030000234531"/>
<dbReference type="HOGENOM" id="CLU_039635_2_1_1"/>
<dbReference type="InParanoid" id="Q5SWL8"/>
<dbReference type="OMA" id="LPWYPSL"/>
<dbReference type="OrthoDB" id="9628575at2759"/>
<dbReference type="PAN-GO" id="Q5SWL8">
    <property type="GO annotations" value="1 GO annotation based on evolutionary models"/>
</dbReference>
<dbReference type="PathwayCommons" id="Q5SWL8"/>
<dbReference type="BioGRID-ORCS" id="645414">
    <property type="hits" value="5 hits in 192 CRISPR screens"/>
</dbReference>
<dbReference type="GenomeRNAi" id="645414"/>
<dbReference type="Pharos" id="Q5SWL8">
    <property type="development level" value="Tdark"/>
</dbReference>
<dbReference type="PRO" id="PR:Q5SWL8"/>
<dbReference type="Proteomes" id="UP000005640">
    <property type="component" value="Chromosome 1"/>
</dbReference>
<dbReference type="RNAct" id="Q5SWL8">
    <property type="molecule type" value="protein"/>
</dbReference>
<dbReference type="Bgee" id="ENSG00000204480">
    <property type="expression patterns" value="Expressed in male germ line stem cell (sensu Vertebrata) in testis"/>
</dbReference>
<dbReference type="GO" id="GO:0031462">
    <property type="term" value="C:Cul2-RING ubiquitin ligase complex"/>
    <property type="evidence" value="ECO:0000318"/>
    <property type="project" value="GO_Central"/>
</dbReference>
<dbReference type="GO" id="GO:0005737">
    <property type="term" value="C:cytoplasm"/>
    <property type="evidence" value="ECO:0000318"/>
    <property type="project" value="GO_Central"/>
</dbReference>
<dbReference type="GO" id="GO:1990756">
    <property type="term" value="F:ubiquitin-like ligase-substrate adaptor activity"/>
    <property type="evidence" value="ECO:0000318"/>
    <property type="project" value="GO_Central"/>
</dbReference>
<dbReference type="GO" id="GO:0043066">
    <property type="term" value="P:negative regulation of apoptotic process"/>
    <property type="evidence" value="ECO:0007669"/>
    <property type="project" value="InterPro"/>
</dbReference>
<dbReference type="GO" id="GO:0045596">
    <property type="term" value="P:negative regulation of cell differentiation"/>
    <property type="evidence" value="ECO:0007669"/>
    <property type="project" value="InterPro"/>
</dbReference>
<dbReference type="GO" id="GO:0045892">
    <property type="term" value="P:negative regulation of DNA-templated transcription"/>
    <property type="evidence" value="ECO:0007669"/>
    <property type="project" value="InterPro"/>
</dbReference>
<dbReference type="GO" id="GO:0008284">
    <property type="term" value="P:positive regulation of cell population proliferation"/>
    <property type="evidence" value="ECO:0007669"/>
    <property type="project" value="InterPro"/>
</dbReference>
<dbReference type="GO" id="GO:0043161">
    <property type="term" value="P:proteasome-mediated ubiquitin-dependent protein catabolic process"/>
    <property type="evidence" value="ECO:0000318"/>
    <property type="project" value="GO_Central"/>
</dbReference>
<dbReference type="FunFam" id="3.80.10.10:FF:000079">
    <property type="entry name" value="PRAME family member 18"/>
    <property type="match status" value="1"/>
</dbReference>
<dbReference type="Gene3D" id="3.80.10.10">
    <property type="entry name" value="Ribonuclease Inhibitor"/>
    <property type="match status" value="1"/>
</dbReference>
<dbReference type="InterPro" id="IPR032675">
    <property type="entry name" value="LRR_dom_sf"/>
</dbReference>
<dbReference type="InterPro" id="IPR026271">
    <property type="entry name" value="PRAME"/>
</dbReference>
<dbReference type="InterPro" id="IPR050694">
    <property type="entry name" value="PRAME_domain"/>
</dbReference>
<dbReference type="PANTHER" id="PTHR14224:SF76">
    <property type="entry name" value="PRAME FAMILY MEMBER 19"/>
    <property type="match status" value="1"/>
</dbReference>
<dbReference type="PANTHER" id="PTHR14224">
    <property type="entry name" value="SIMILAR TO PREFERENTIALLY EXPRESSED ANTIGEN IN MELANOMA-LIKE 3"/>
    <property type="match status" value="1"/>
</dbReference>
<dbReference type="PIRSF" id="PIRSF038286">
    <property type="entry name" value="PRAME"/>
    <property type="match status" value="1"/>
</dbReference>
<dbReference type="SUPFAM" id="SSF52047">
    <property type="entry name" value="RNI-like"/>
    <property type="match status" value="1"/>
</dbReference>
<comment type="similarity">
    <text evidence="3">Belongs to the PRAME family.</text>
</comment>
<keyword id="KW-0433">Leucine-rich repeat</keyword>
<keyword id="KW-1185">Reference proteome</keyword>
<keyword id="KW-0677">Repeat</keyword>
<accession>Q5SWL8</accession>
<feature type="chain" id="PRO_0000290167" description="PRAME family member 19">
    <location>
        <begin position="1"/>
        <end position="479"/>
    </location>
</feature>
<feature type="repeat" description="LRR 1" evidence="2">
    <location>
        <begin position="15"/>
        <end position="38"/>
    </location>
</feature>
<feature type="repeat" description="LRR 1; degenerate" evidence="1">
    <location>
        <begin position="97"/>
        <end position="124"/>
    </location>
</feature>
<feature type="repeat" description="LRR 2; degenerate" evidence="1">
    <location>
        <begin position="179"/>
        <end position="203"/>
    </location>
</feature>
<feature type="repeat" description="LRR 3; degenerate" evidence="1">
    <location>
        <begin position="204"/>
        <end position="230"/>
    </location>
</feature>
<feature type="repeat" description="LRR 4; degenerate" evidence="1">
    <location>
        <begin position="231"/>
        <end position="265"/>
    </location>
</feature>
<feature type="repeat" description="LRR 5" evidence="1">
    <location>
        <begin position="266"/>
        <end position="291"/>
    </location>
</feature>
<feature type="repeat" description="LRR 6" evidence="1">
    <location>
        <begin position="292"/>
        <end position="323"/>
    </location>
</feature>
<feature type="repeat" description="LRR 7" evidence="1">
    <location>
        <begin position="324"/>
        <end position="342"/>
    </location>
</feature>
<feature type="repeat" description="LRR 8" evidence="1">
    <location>
        <begin position="348"/>
        <end position="375"/>
    </location>
</feature>
<feature type="repeat" description="LRR 9" evidence="1">
    <location>
        <begin position="376"/>
        <end position="400"/>
    </location>
</feature>
<name>PRA19_HUMAN</name>